<proteinExistence type="inferred from homology"/>
<reference key="1">
    <citation type="journal article" date="2004" name="Nucleic Acids Res.">
        <title>Unique features revealed by the genome sequence of Acinetobacter sp. ADP1, a versatile and naturally transformation competent bacterium.</title>
        <authorList>
            <person name="Barbe V."/>
            <person name="Vallenet D."/>
            <person name="Fonknechten N."/>
            <person name="Kreimeyer A."/>
            <person name="Oztas S."/>
            <person name="Labarre L."/>
            <person name="Cruveiller S."/>
            <person name="Robert C."/>
            <person name="Duprat S."/>
            <person name="Wincker P."/>
            <person name="Ornston L.N."/>
            <person name="Weissenbach J."/>
            <person name="Marliere P."/>
            <person name="Cohen G.N."/>
            <person name="Medigue C."/>
        </authorList>
    </citation>
    <scope>NUCLEOTIDE SEQUENCE [LARGE SCALE GENOMIC DNA]</scope>
    <source>
        <strain>ATCC 33305 / BD413 / ADP1</strain>
    </source>
</reference>
<evidence type="ECO:0000255" key="1">
    <source>
        <dbReference type="HAMAP-Rule" id="MF_01026"/>
    </source>
</evidence>
<dbReference type="EC" id="4.2.1.33" evidence="1"/>
<dbReference type="EMBL" id="CR543861">
    <property type="protein sequence ID" value="CAG67398.1"/>
    <property type="molecule type" value="Genomic_DNA"/>
</dbReference>
<dbReference type="RefSeq" id="WP_004920241.1">
    <property type="nucleotide sequence ID" value="NC_005966.1"/>
</dbReference>
<dbReference type="SMR" id="Q6FEW0"/>
<dbReference type="STRING" id="202950.GCA_001485005_00712"/>
<dbReference type="GeneID" id="45232953"/>
<dbReference type="KEGG" id="aci:ACIAD0463"/>
<dbReference type="eggNOG" id="COG0065">
    <property type="taxonomic scope" value="Bacteria"/>
</dbReference>
<dbReference type="HOGENOM" id="CLU_006714_3_4_6"/>
<dbReference type="OrthoDB" id="9802769at2"/>
<dbReference type="BioCyc" id="ASP62977:ACIAD_RS02125-MONOMER"/>
<dbReference type="UniPathway" id="UPA00048">
    <property type="reaction ID" value="UER00071"/>
</dbReference>
<dbReference type="Proteomes" id="UP000000430">
    <property type="component" value="Chromosome"/>
</dbReference>
<dbReference type="GO" id="GO:0003861">
    <property type="term" value="F:3-isopropylmalate dehydratase activity"/>
    <property type="evidence" value="ECO:0007669"/>
    <property type="project" value="UniProtKB-UniRule"/>
</dbReference>
<dbReference type="GO" id="GO:0051539">
    <property type="term" value="F:4 iron, 4 sulfur cluster binding"/>
    <property type="evidence" value="ECO:0007669"/>
    <property type="project" value="UniProtKB-KW"/>
</dbReference>
<dbReference type="GO" id="GO:0046872">
    <property type="term" value="F:metal ion binding"/>
    <property type="evidence" value="ECO:0007669"/>
    <property type="project" value="UniProtKB-KW"/>
</dbReference>
<dbReference type="GO" id="GO:0009098">
    <property type="term" value="P:L-leucine biosynthetic process"/>
    <property type="evidence" value="ECO:0007669"/>
    <property type="project" value="UniProtKB-UniRule"/>
</dbReference>
<dbReference type="CDD" id="cd01583">
    <property type="entry name" value="IPMI"/>
    <property type="match status" value="1"/>
</dbReference>
<dbReference type="FunFam" id="3.30.499.10:FF:000007">
    <property type="entry name" value="3-isopropylmalate dehydratase large subunit"/>
    <property type="match status" value="1"/>
</dbReference>
<dbReference type="Gene3D" id="3.30.499.10">
    <property type="entry name" value="Aconitase, domain 3"/>
    <property type="match status" value="2"/>
</dbReference>
<dbReference type="HAMAP" id="MF_01026">
    <property type="entry name" value="LeuC_type1"/>
    <property type="match status" value="1"/>
</dbReference>
<dbReference type="InterPro" id="IPR004430">
    <property type="entry name" value="3-IsopropMal_deHydase_lsu"/>
</dbReference>
<dbReference type="InterPro" id="IPR015931">
    <property type="entry name" value="Acnase/IPM_dHydase_lsu_aba_1/3"/>
</dbReference>
<dbReference type="InterPro" id="IPR001030">
    <property type="entry name" value="Acoase/IPM_deHydtase_lsu_aba"/>
</dbReference>
<dbReference type="InterPro" id="IPR018136">
    <property type="entry name" value="Aconitase_4Fe-4S_BS"/>
</dbReference>
<dbReference type="InterPro" id="IPR036008">
    <property type="entry name" value="Aconitase_4Fe-4S_dom"/>
</dbReference>
<dbReference type="InterPro" id="IPR050067">
    <property type="entry name" value="IPM_dehydratase_rel_enz"/>
</dbReference>
<dbReference type="InterPro" id="IPR033941">
    <property type="entry name" value="IPMI_cat"/>
</dbReference>
<dbReference type="NCBIfam" id="TIGR00170">
    <property type="entry name" value="leuC"/>
    <property type="match status" value="1"/>
</dbReference>
<dbReference type="NCBIfam" id="NF004016">
    <property type="entry name" value="PRK05478.1"/>
    <property type="match status" value="1"/>
</dbReference>
<dbReference type="NCBIfam" id="NF009116">
    <property type="entry name" value="PRK12466.1"/>
    <property type="match status" value="1"/>
</dbReference>
<dbReference type="PANTHER" id="PTHR43822:SF9">
    <property type="entry name" value="3-ISOPROPYLMALATE DEHYDRATASE"/>
    <property type="match status" value="1"/>
</dbReference>
<dbReference type="PANTHER" id="PTHR43822">
    <property type="entry name" value="HOMOACONITASE, MITOCHONDRIAL-RELATED"/>
    <property type="match status" value="1"/>
</dbReference>
<dbReference type="Pfam" id="PF00330">
    <property type="entry name" value="Aconitase"/>
    <property type="match status" value="1"/>
</dbReference>
<dbReference type="PRINTS" id="PR00415">
    <property type="entry name" value="ACONITASE"/>
</dbReference>
<dbReference type="SUPFAM" id="SSF53732">
    <property type="entry name" value="Aconitase iron-sulfur domain"/>
    <property type="match status" value="1"/>
</dbReference>
<dbReference type="PROSITE" id="PS00450">
    <property type="entry name" value="ACONITASE_1"/>
    <property type="match status" value="1"/>
</dbReference>
<dbReference type="PROSITE" id="PS01244">
    <property type="entry name" value="ACONITASE_2"/>
    <property type="match status" value="1"/>
</dbReference>
<organism>
    <name type="scientific">Acinetobacter baylyi (strain ATCC 33305 / BD413 / ADP1)</name>
    <dbReference type="NCBI Taxonomy" id="62977"/>
    <lineage>
        <taxon>Bacteria</taxon>
        <taxon>Pseudomonadati</taxon>
        <taxon>Pseudomonadota</taxon>
        <taxon>Gammaproteobacteria</taxon>
        <taxon>Moraxellales</taxon>
        <taxon>Moraxellaceae</taxon>
        <taxon>Acinetobacter</taxon>
    </lineage>
</organism>
<gene>
    <name evidence="1" type="primary">leuC</name>
    <name type="ordered locus">ACIAD0463</name>
</gene>
<protein>
    <recommendedName>
        <fullName evidence="1">3-isopropylmalate dehydratase large subunit</fullName>
        <ecNumber evidence="1">4.2.1.33</ecNumber>
    </recommendedName>
    <alternativeName>
        <fullName evidence="1">Alpha-IPM isomerase</fullName>
        <shortName evidence="1">IPMI</shortName>
    </alternativeName>
    <alternativeName>
        <fullName evidence="1">Isopropylmalate isomerase</fullName>
    </alternativeName>
</protein>
<keyword id="KW-0004">4Fe-4S</keyword>
<keyword id="KW-0028">Amino-acid biosynthesis</keyword>
<keyword id="KW-0100">Branched-chain amino acid biosynthesis</keyword>
<keyword id="KW-0408">Iron</keyword>
<keyword id="KW-0411">Iron-sulfur</keyword>
<keyword id="KW-0432">Leucine biosynthesis</keyword>
<keyword id="KW-0456">Lyase</keyword>
<keyword id="KW-0479">Metal-binding</keyword>
<comment type="function">
    <text evidence="1">Catalyzes the isomerization between 2-isopropylmalate and 3-isopropylmalate, via the formation of 2-isopropylmaleate.</text>
</comment>
<comment type="catalytic activity">
    <reaction evidence="1">
        <text>(2R,3S)-3-isopropylmalate = (2S)-2-isopropylmalate</text>
        <dbReference type="Rhea" id="RHEA:32287"/>
        <dbReference type="ChEBI" id="CHEBI:1178"/>
        <dbReference type="ChEBI" id="CHEBI:35121"/>
        <dbReference type="EC" id="4.2.1.33"/>
    </reaction>
</comment>
<comment type="cofactor">
    <cofactor evidence="1">
        <name>[4Fe-4S] cluster</name>
        <dbReference type="ChEBI" id="CHEBI:49883"/>
    </cofactor>
    <text evidence="1">Binds 1 [4Fe-4S] cluster per subunit.</text>
</comment>
<comment type="pathway">
    <text evidence="1">Amino-acid biosynthesis; L-leucine biosynthesis; L-leucine from 3-methyl-2-oxobutanoate: step 2/4.</text>
</comment>
<comment type="subunit">
    <text evidence="1">Heterodimer of LeuC and LeuD.</text>
</comment>
<comment type="similarity">
    <text evidence="1">Belongs to the aconitase/IPM isomerase family. LeuC type 1 subfamily.</text>
</comment>
<feature type="chain" id="PRO_0000076687" description="3-isopropylmalate dehydratase large subunit">
    <location>
        <begin position="1"/>
        <end position="477"/>
    </location>
</feature>
<feature type="binding site" evidence="1">
    <location>
        <position position="358"/>
    </location>
    <ligand>
        <name>[4Fe-4S] cluster</name>
        <dbReference type="ChEBI" id="CHEBI:49883"/>
    </ligand>
</feature>
<feature type="binding site" evidence="1">
    <location>
        <position position="419"/>
    </location>
    <ligand>
        <name>[4Fe-4S] cluster</name>
        <dbReference type="ChEBI" id="CHEBI:49883"/>
    </ligand>
</feature>
<feature type="binding site" evidence="1">
    <location>
        <position position="422"/>
    </location>
    <ligand>
        <name>[4Fe-4S] cluster</name>
        <dbReference type="ChEBI" id="CHEBI:49883"/>
    </ligand>
</feature>
<accession>Q6FEW0</accession>
<sequence>MAGTTQGAKTLYDKLWDDHLVSQRDDGSCLIYIDRHLLHEVTSPQAFEGLQLAGRQPWRLNANIATPDHNVPTSKKEREQGIAGIEDDTSRIQVQTLDDNCKTFNIVEFGINDIRQGIVHVVGPEQGLTLPGMTVVCGDSHTATHGAFGCLAHGIGTSEVEHVLATQCLIQKKSKNMLIRVDGQLGKGVTPKDVVLAIIGKIGTAGGTGYAIEFGGQVFRDMSIEGRMTVCNMAIEAGARVGMVAVDDKTIEYVQSRHYAPKGEQWDQAVAYWNTLHSDDDAVFDEVVVLNGAEIEPQVSWGTSPEMVIPVSQAVPTLEQAKDDVQRNDWTRAYQYMGLTAGQALADIQLDRVFIGSCTNSRIEDIRAAAEVVKGRKVASSIKQAMIVPGSGLVKQQAEQEGLDQVFLEAGFEWREPGCSMCLAMNSDKLQPGEHCASTSNRNFEGRQGNGGRTHLVSPAMAAAAAIAGHFVDVRSF</sequence>
<name>LEUC_ACIAD</name>